<gene>
    <name type="ordered locus">KLLA0F26268g</name>
</gene>
<protein>
    <recommendedName>
        <fullName evidence="1">Arginine biosynthesis bifunctional protein ArgJ, mitochondrial</fullName>
    </recommendedName>
    <domain>
        <recommendedName>
            <fullName evidence="1">Glutamate N-acetyltransferase</fullName>
            <shortName evidence="1">GAT</shortName>
            <ecNumber evidence="1">2.3.1.35</ecNumber>
        </recommendedName>
        <alternativeName>
            <fullName evidence="1">Ornithine acetyltransferase</fullName>
            <shortName evidence="1">OATase</shortName>
        </alternativeName>
        <alternativeName>
            <fullName evidence="1">Ornithine transacetylase</fullName>
        </alternativeName>
    </domain>
    <domain>
        <recommendedName>
            <fullName evidence="1">Amino-acid acetyltransferase</fullName>
            <ecNumber evidence="1">2.3.1.1</ecNumber>
        </recommendedName>
        <alternativeName>
            <fullName evidence="1">N-acetylglutamate synthase</fullName>
            <shortName evidence="1">AGS</shortName>
        </alternativeName>
    </domain>
    <component>
        <recommendedName>
            <fullName evidence="1">Arginine biosynthesis bifunctional protein ArgJ alpha chain</fullName>
        </recommendedName>
    </component>
    <component>
        <recommendedName>
            <fullName evidence="1">Arginine biosynthesis bifunctional protein ArgJ beta chain</fullName>
        </recommendedName>
    </component>
</protein>
<name>ARGJ_KLULA</name>
<keyword id="KW-0012">Acyltransferase</keyword>
<keyword id="KW-0028">Amino-acid biosynthesis</keyword>
<keyword id="KW-0055">Arginine biosynthesis</keyword>
<keyword id="KW-0068">Autocatalytic cleavage</keyword>
<keyword id="KW-0496">Mitochondrion</keyword>
<keyword id="KW-0511">Multifunctional enzyme</keyword>
<keyword id="KW-1185">Reference proteome</keyword>
<keyword id="KW-0808">Transferase</keyword>
<sequence length="441" mass="47484">MKVTFSLMQKASKQIDKFALYVPKSGVFPKGFKVATQATGVKKNGNLDLGIIRNVNTSRPSSAAAVFTTNKFKAAPVLVSKEVLEVTGGENVDAIVVNSGCANAVTGEVGLKDAREIAGVANQNLGKQNATLVMSTGVIGQRLSMDKIVPALSQQFETNAFKDDFESWLNLARAISTTDTFPKLISSNFKLANGTEYTLTGIAKGAGMICPNMATLLGFIVTDLPITPSALQKMLRSATDRSFNCISVDGDMSTNDTISMLANGAVDTAVIDENSQDFVQVQTQVTEFAQRLAQLVVRDGEGSTKFVTVNVKNALNFKDAKIIAESISNSMLVKTALYGQDANWGRILCAIGYAKLDNLQSLDDKKINVSFVATDNSEPKELKLIVDGVPQLDIDEARASELLAQQDLEVLVDLGTGSEECQFWTCDLTHEYVTINGDYRS</sequence>
<evidence type="ECO:0000255" key="1">
    <source>
        <dbReference type="HAMAP-Rule" id="MF_03124"/>
    </source>
</evidence>
<comment type="function">
    <text evidence="1">Catalyzes two activities which are involved in the cyclic version of arginine biosynthesis: the synthesis of acetylglutamate from glutamate and acetyl-CoA, and of ornithine by transacetylation between acetylornithine and glutamate.</text>
</comment>
<comment type="catalytic activity">
    <reaction evidence="1">
        <text>N(2)-acetyl-L-ornithine + L-glutamate = N-acetyl-L-glutamate + L-ornithine</text>
        <dbReference type="Rhea" id="RHEA:15349"/>
        <dbReference type="ChEBI" id="CHEBI:29985"/>
        <dbReference type="ChEBI" id="CHEBI:44337"/>
        <dbReference type="ChEBI" id="CHEBI:46911"/>
        <dbReference type="ChEBI" id="CHEBI:57805"/>
        <dbReference type="EC" id="2.3.1.35"/>
    </reaction>
</comment>
<comment type="catalytic activity">
    <reaction evidence="1">
        <text>L-glutamate + acetyl-CoA = N-acetyl-L-glutamate + CoA + H(+)</text>
        <dbReference type="Rhea" id="RHEA:24292"/>
        <dbReference type="ChEBI" id="CHEBI:15378"/>
        <dbReference type="ChEBI" id="CHEBI:29985"/>
        <dbReference type="ChEBI" id="CHEBI:44337"/>
        <dbReference type="ChEBI" id="CHEBI:57287"/>
        <dbReference type="ChEBI" id="CHEBI:57288"/>
        <dbReference type="EC" id="2.3.1.1"/>
    </reaction>
</comment>
<comment type="pathway">
    <text evidence="1">Amino-acid biosynthesis; L-arginine biosynthesis; L-ornithine and N-acetyl-L-glutamate from L-glutamate and N(2)-acetyl-L-ornithine (cyclic): step 1/1.</text>
</comment>
<comment type="pathway">
    <text evidence="1">Amino-acid biosynthesis; L-arginine biosynthesis; N(2)-acetyl-L-ornithine from L-glutamate: step 1/4.</text>
</comment>
<comment type="subunit">
    <text evidence="1">Heterodimer of an alpha and a beta chain.</text>
</comment>
<comment type="subcellular location">
    <subcellularLocation>
        <location evidence="1">Mitochondrion matrix</location>
    </subcellularLocation>
</comment>
<comment type="PTM">
    <text evidence="1">The alpha and beta chains are autoproteolytically processed from a single precursor protein within the mitochondrion.</text>
</comment>
<comment type="miscellaneous">
    <text evidence="1">This protein may be expected to contain an N-terminal transit peptide but none has been predicted.</text>
</comment>
<comment type="similarity">
    <text evidence="1">Belongs to the ArgJ family.</text>
</comment>
<reference key="1">
    <citation type="journal article" date="2004" name="Nature">
        <title>Genome evolution in yeasts.</title>
        <authorList>
            <person name="Dujon B."/>
            <person name="Sherman D."/>
            <person name="Fischer G."/>
            <person name="Durrens P."/>
            <person name="Casaregola S."/>
            <person name="Lafontaine I."/>
            <person name="de Montigny J."/>
            <person name="Marck C."/>
            <person name="Neuveglise C."/>
            <person name="Talla E."/>
            <person name="Goffard N."/>
            <person name="Frangeul L."/>
            <person name="Aigle M."/>
            <person name="Anthouard V."/>
            <person name="Babour A."/>
            <person name="Barbe V."/>
            <person name="Barnay S."/>
            <person name="Blanchin S."/>
            <person name="Beckerich J.-M."/>
            <person name="Beyne E."/>
            <person name="Bleykasten C."/>
            <person name="Boisrame A."/>
            <person name="Boyer J."/>
            <person name="Cattolico L."/>
            <person name="Confanioleri F."/>
            <person name="de Daruvar A."/>
            <person name="Despons L."/>
            <person name="Fabre E."/>
            <person name="Fairhead C."/>
            <person name="Ferry-Dumazet H."/>
            <person name="Groppi A."/>
            <person name="Hantraye F."/>
            <person name="Hennequin C."/>
            <person name="Jauniaux N."/>
            <person name="Joyet P."/>
            <person name="Kachouri R."/>
            <person name="Kerrest A."/>
            <person name="Koszul R."/>
            <person name="Lemaire M."/>
            <person name="Lesur I."/>
            <person name="Ma L."/>
            <person name="Muller H."/>
            <person name="Nicaud J.-M."/>
            <person name="Nikolski M."/>
            <person name="Oztas S."/>
            <person name="Ozier-Kalogeropoulos O."/>
            <person name="Pellenz S."/>
            <person name="Potier S."/>
            <person name="Richard G.-F."/>
            <person name="Straub M.-L."/>
            <person name="Suleau A."/>
            <person name="Swennen D."/>
            <person name="Tekaia F."/>
            <person name="Wesolowski-Louvel M."/>
            <person name="Westhof E."/>
            <person name="Wirth B."/>
            <person name="Zeniou-Meyer M."/>
            <person name="Zivanovic Y."/>
            <person name="Bolotin-Fukuhara M."/>
            <person name="Thierry A."/>
            <person name="Bouchier C."/>
            <person name="Caudron B."/>
            <person name="Scarpelli C."/>
            <person name="Gaillardin C."/>
            <person name="Weissenbach J."/>
            <person name="Wincker P."/>
            <person name="Souciet J.-L."/>
        </authorList>
    </citation>
    <scope>NUCLEOTIDE SEQUENCE [LARGE SCALE GENOMIC DNA]</scope>
    <source>
        <strain>ATCC 8585 / CBS 2359 / DSM 70799 / NBRC 1267 / NRRL Y-1140 / WM37</strain>
    </source>
</reference>
<accession>Q6CII9</accession>
<dbReference type="EC" id="2.3.1.35" evidence="1"/>
<dbReference type="EC" id="2.3.1.1" evidence="1"/>
<dbReference type="EMBL" id="CR382126">
    <property type="protein sequence ID" value="CAG98958.1"/>
    <property type="molecule type" value="Genomic_DNA"/>
</dbReference>
<dbReference type="RefSeq" id="XP_456250.1">
    <property type="nucleotide sequence ID" value="XM_456250.1"/>
</dbReference>
<dbReference type="SMR" id="Q6CII9"/>
<dbReference type="FunCoup" id="Q6CII9">
    <property type="interactions" value="317"/>
</dbReference>
<dbReference type="STRING" id="284590.Q6CII9"/>
<dbReference type="MEROPS" id="T05.001"/>
<dbReference type="PaxDb" id="284590-Q6CII9"/>
<dbReference type="KEGG" id="kla:KLLA0_F26268g"/>
<dbReference type="eggNOG" id="KOG2786">
    <property type="taxonomic scope" value="Eukaryota"/>
</dbReference>
<dbReference type="HOGENOM" id="CLU_027172_1_0_1"/>
<dbReference type="InParanoid" id="Q6CII9"/>
<dbReference type="OMA" id="WGRIVMA"/>
<dbReference type="UniPathway" id="UPA00068">
    <property type="reaction ID" value="UER00106"/>
</dbReference>
<dbReference type="UniPathway" id="UPA00068">
    <property type="reaction ID" value="UER00111"/>
</dbReference>
<dbReference type="Proteomes" id="UP000000598">
    <property type="component" value="Chromosome F"/>
</dbReference>
<dbReference type="GO" id="GO:0005759">
    <property type="term" value="C:mitochondrial matrix"/>
    <property type="evidence" value="ECO:0007669"/>
    <property type="project" value="UniProtKB-SubCell"/>
</dbReference>
<dbReference type="GO" id="GO:0004358">
    <property type="term" value="F:glutamate N-acetyltransferase activity"/>
    <property type="evidence" value="ECO:0007669"/>
    <property type="project" value="UniProtKB-UniRule"/>
</dbReference>
<dbReference type="GO" id="GO:0004042">
    <property type="term" value="F:L-glutamate N-acetyltransferase activity"/>
    <property type="evidence" value="ECO:0007669"/>
    <property type="project" value="UniProtKB-UniRule"/>
</dbReference>
<dbReference type="GO" id="GO:0006526">
    <property type="term" value="P:L-arginine biosynthetic process"/>
    <property type="evidence" value="ECO:0007669"/>
    <property type="project" value="UniProtKB-UniRule"/>
</dbReference>
<dbReference type="GO" id="GO:0006592">
    <property type="term" value="P:ornithine biosynthetic process"/>
    <property type="evidence" value="ECO:0007669"/>
    <property type="project" value="TreeGrafter"/>
</dbReference>
<dbReference type="CDD" id="cd02152">
    <property type="entry name" value="OAT"/>
    <property type="match status" value="1"/>
</dbReference>
<dbReference type="FunFam" id="3.60.70.12:FF:000001">
    <property type="entry name" value="Arginine biosynthesis bifunctional protein ArgJ, chloroplastic"/>
    <property type="match status" value="1"/>
</dbReference>
<dbReference type="FunFam" id="3.10.20.340:FF:000002">
    <property type="entry name" value="Arginine biosynthesis bifunctional protein ArgJ, mitochondrial"/>
    <property type="match status" value="1"/>
</dbReference>
<dbReference type="FunFam" id="3.30.2330.10:FF:000001">
    <property type="entry name" value="Arginine biosynthesis bifunctional protein ArgJ, mitochondrial"/>
    <property type="match status" value="1"/>
</dbReference>
<dbReference type="Gene3D" id="3.30.2330.10">
    <property type="entry name" value="arginine biosynthesis bifunctional protein suprefamily"/>
    <property type="match status" value="1"/>
</dbReference>
<dbReference type="Gene3D" id="3.10.20.340">
    <property type="entry name" value="ArgJ beta chain, C-terminal domain"/>
    <property type="match status" value="1"/>
</dbReference>
<dbReference type="Gene3D" id="3.60.70.12">
    <property type="entry name" value="L-amino peptidase D-ALA esterase/amidase"/>
    <property type="match status" value="1"/>
</dbReference>
<dbReference type="HAMAP" id="MF_01106">
    <property type="entry name" value="ArgJ"/>
    <property type="match status" value="1"/>
</dbReference>
<dbReference type="InterPro" id="IPR002813">
    <property type="entry name" value="Arg_biosynth_ArgJ"/>
</dbReference>
<dbReference type="InterPro" id="IPR016117">
    <property type="entry name" value="ArgJ-like_dom_sf"/>
</dbReference>
<dbReference type="InterPro" id="IPR042195">
    <property type="entry name" value="ArgJ_beta_C"/>
</dbReference>
<dbReference type="NCBIfam" id="TIGR00120">
    <property type="entry name" value="ArgJ"/>
    <property type="match status" value="1"/>
</dbReference>
<dbReference type="NCBIfam" id="NF003802">
    <property type="entry name" value="PRK05388.1"/>
    <property type="match status" value="1"/>
</dbReference>
<dbReference type="PANTHER" id="PTHR23100">
    <property type="entry name" value="ARGININE BIOSYNTHESIS BIFUNCTIONAL PROTEIN ARGJ"/>
    <property type="match status" value="1"/>
</dbReference>
<dbReference type="PANTHER" id="PTHR23100:SF0">
    <property type="entry name" value="ARGININE BIOSYNTHESIS BIFUNCTIONAL PROTEIN ARGJ, MITOCHONDRIAL"/>
    <property type="match status" value="1"/>
</dbReference>
<dbReference type="Pfam" id="PF01960">
    <property type="entry name" value="ArgJ"/>
    <property type="match status" value="1"/>
</dbReference>
<dbReference type="SUPFAM" id="SSF56266">
    <property type="entry name" value="DmpA/ArgJ-like"/>
    <property type="match status" value="1"/>
</dbReference>
<feature type="chain" id="PRO_0000398054" description="Arginine biosynthesis bifunctional protein ArgJ alpha chain" evidence="1">
    <location>
        <begin position="1"/>
        <end position="214"/>
    </location>
</feature>
<feature type="chain" id="PRO_0000398055" description="Arginine biosynthesis bifunctional protein ArgJ beta chain" evidence="1">
    <location>
        <begin position="215"/>
        <end position="441"/>
    </location>
</feature>
<feature type="active site" description="Nucleophile" evidence="1">
    <location>
        <position position="215"/>
    </location>
</feature>
<feature type="binding site" evidence="1">
    <location>
        <position position="177"/>
    </location>
    <ligand>
        <name>substrate</name>
    </ligand>
</feature>
<feature type="binding site" evidence="1">
    <location>
        <position position="204"/>
    </location>
    <ligand>
        <name>substrate</name>
    </ligand>
</feature>
<feature type="binding site" evidence="1">
    <location>
        <position position="215"/>
    </location>
    <ligand>
        <name>substrate</name>
    </ligand>
</feature>
<feature type="binding site" evidence="1">
    <location>
        <position position="301"/>
    </location>
    <ligand>
        <name>substrate</name>
    </ligand>
</feature>
<feature type="binding site" evidence="1">
    <location>
        <position position="436"/>
    </location>
    <ligand>
        <name>substrate</name>
    </ligand>
</feature>
<feature type="binding site" evidence="1">
    <location>
        <position position="441"/>
    </location>
    <ligand>
        <name>substrate</name>
    </ligand>
</feature>
<feature type="site" description="Involved in the stabilization of negative charge on the oxyanion by the formation of the oxyanion hole" evidence="1">
    <location>
        <position position="136"/>
    </location>
</feature>
<feature type="site" description="Involved in the stabilization of negative charge on the oxyanion by the formation of the oxyanion hole" evidence="1">
    <location>
        <position position="137"/>
    </location>
</feature>
<feature type="site" description="Cleavage; by autolysis" evidence="1">
    <location>
        <begin position="214"/>
        <end position="215"/>
    </location>
</feature>
<organism>
    <name type="scientific">Kluyveromyces lactis (strain ATCC 8585 / CBS 2359 / DSM 70799 / NBRC 1267 / NRRL Y-1140 / WM37)</name>
    <name type="common">Yeast</name>
    <name type="synonym">Candida sphaerica</name>
    <dbReference type="NCBI Taxonomy" id="284590"/>
    <lineage>
        <taxon>Eukaryota</taxon>
        <taxon>Fungi</taxon>
        <taxon>Dikarya</taxon>
        <taxon>Ascomycota</taxon>
        <taxon>Saccharomycotina</taxon>
        <taxon>Saccharomycetes</taxon>
        <taxon>Saccharomycetales</taxon>
        <taxon>Saccharomycetaceae</taxon>
        <taxon>Kluyveromyces</taxon>
    </lineage>
</organism>
<proteinExistence type="inferred from homology"/>